<evidence type="ECO:0000255" key="1">
    <source>
        <dbReference type="HAMAP-Rule" id="MF_00021"/>
    </source>
</evidence>
<reference key="1">
    <citation type="journal article" date="2008" name="J. Bacteriol.">
        <title>Genome sequence of Lactobacillus helveticus: an organism distinguished by selective gene loss and IS element expansion.</title>
        <authorList>
            <person name="Callanan M."/>
            <person name="Kaleta P."/>
            <person name="O'Callaghan J."/>
            <person name="O'Sullivan O."/>
            <person name="Jordan K."/>
            <person name="McAuliffe O."/>
            <person name="Sangrador-Vegas A."/>
            <person name="Slattery L."/>
            <person name="Fitzgerald G.F."/>
            <person name="Beresford T."/>
            <person name="Ross R.P."/>
        </authorList>
    </citation>
    <scope>NUCLEOTIDE SEQUENCE [LARGE SCALE GENOMIC DNA]</scope>
    <source>
        <strain>DPC 4571</strain>
    </source>
</reference>
<gene>
    <name evidence="1" type="primary">thiI</name>
    <name type="ordered locus">lhv_0823</name>
</gene>
<organism>
    <name type="scientific">Lactobacillus helveticus (strain DPC 4571)</name>
    <dbReference type="NCBI Taxonomy" id="405566"/>
    <lineage>
        <taxon>Bacteria</taxon>
        <taxon>Bacillati</taxon>
        <taxon>Bacillota</taxon>
        <taxon>Bacilli</taxon>
        <taxon>Lactobacillales</taxon>
        <taxon>Lactobacillaceae</taxon>
        <taxon>Lactobacillus</taxon>
    </lineage>
</organism>
<protein>
    <recommendedName>
        <fullName evidence="1">Probable tRNA sulfurtransferase</fullName>
        <ecNumber evidence="1">2.8.1.4</ecNumber>
    </recommendedName>
    <alternativeName>
        <fullName evidence="1">Sulfur carrier protein ThiS sulfurtransferase</fullName>
    </alternativeName>
    <alternativeName>
        <fullName evidence="1">Thiamine biosynthesis protein ThiI</fullName>
    </alternativeName>
    <alternativeName>
        <fullName evidence="1">tRNA 4-thiouridine synthase</fullName>
    </alternativeName>
</protein>
<sequence length="405" mass="45820">MEYTEVMVRYGELSTKGKNRKDFINRLASNVEKVLKDLPQIDFHPRHDRMHIVLNGAPFAEVDKRLKKVFGIQTYSPAIKIPKTLEDIEKTSLELMQETFKPGMTFKVNTKRSDHKFEYDTNQLNNLVGDYLFDHIDHLKAEMKHPDLVLRIEVRQDAVYISNQLLHGIGGMPVGTAGKAVMMLSGGIDSPVASYLAMKRGVDIEMVHFFSPPYTTEKALAKAKELTGILANYVGKINFIAVPFAEIQETIKEKLPEGYLMTVQRRFMLQLADRIRAKRGGLAIFNGESVGQVASQTLQSMVAINDVTTTPVIRPVATMDKTEIIKLAEDIGTFDLSIQPFEDCCTIFAPPRPKTKPKLDKAREYEARLDVEGLIQRAMDGIEVMPIYPNEKFINDKIEEDQDLL</sequence>
<proteinExistence type="inferred from homology"/>
<keyword id="KW-0067">ATP-binding</keyword>
<keyword id="KW-0963">Cytoplasm</keyword>
<keyword id="KW-0547">Nucleotide-binding</keyword>
<keyword id="KW-0694">RNA-binding</keyword>
<keyword id="KW-0784">Thiamine biosynthesis</keyword>
<keyword id="KW-0808">Transferase</keyword>
<keyword id="KW-0820">tRNA-binding</keyword>
<feature type="chain" id="PRO_1000074237" description="Probable tRNA sulfurtransferase">
    <location>
        <begin position="1"/>
        <end position="405"/>
    </location>
</feature>
<feature type="domain" description="THUMP" evidence="1">
    <location>
        <begin position="60"/>
        <end position="165"/>
    </location>
</feature>
<feature type="binding site" evidence="1">
    <location>
        <begin position="183"/>
        <end position="184"/>
    </location>
    <ligand>
        <name>ATP</name>
        <dbReference type="ChEBI" id="CHEBI:30616"/>
    </ligand>
</feature>
<feature type="binding site" evidence="1">
    <location>
        <begin position="208"/>
        <end position="209"/>
    </location>
    <ligand>
        <name>ATP</name>
        <dbReference type="ChEBI" id="CHEBI:30616"/>
    </ligand>
</feature>
<feature type="binding site" evidence="1">
    <location>
        <position position="265"/>
    </location>
    <ligand>
        <name>ATP</name>
        <dbReference type="ChEBI" id="CHEBI:30616"/>
    </ligand>
</feature>
<feature type="binding site" evidence="1">
    <location>
        <position position="287"/>
    </location>
    <ligand>
        <name>ATP</name>
        <dbReference type="ChEBI" id="CHEBI:30616"/>
    </ligand>
</feature>
<feature type="binding site" evidence="1">
    <location>
        <position position="296"/>
    </location>
    <ligand>
        <name>ATP</name>
        <dbReference type="ChEBI" id="CHEBI:30616"/>
    </ligand>
</feature>
<comment type="function">
    <text evidence="1">Catalyzes the ATP-dependent transfer of a sulfur to tRNA to produce 4-thiouridine in position 8 of tRNAs, which functions as a near-UV photosensor. Also catalyzes the transfer of sulfur to the sulfur carrier protein ThiS, forming ThiS-thiocarboxylate. This is a step in the synthesis of thiazole, in the thiamine biosynthesis pathway. The sulfur is donated as persulfide by IscS.</text>
</comment>
<comment type="catalytic activity">
    <reaction evidence="1">
        <text>[ThiI sulfur-carrier protein]-S-sulfanyl-L-cysteine + a uridine in tRNA + 2 reduced [2Fe-2S]-[ferredoxin] + ATP + H(+) = [ThiI sulfur-carrier protein]-L-cysteine + a 4-thiouridine in tRNA + 2 oxidized [2Fe-2S]-[ferredoxin] + AMP + diphosphate</text>
        <dbReference type="Rhea" id="RHEA:24176"/>
        <dbReference type="Rhea" id="RHEA-COMP:10000"/>
        <dbReference type="Rhea" id="RHEA-COMP:10001"/>
        <dbReference type="Rhea" id="RHEA-COMP:13337"/>
        <dbReference type="Rhea" id="RHEA-COMP:13338"/>
        <dbReference type="Rhea" id="RHEA-COMP:13339"/>
        <dbReference type="Rhea" id="RHEA-COMP:13340"/>
        <dbReference type="ChEBI" id="CHEBI:15378"/>
        <dbReference type="ChEBI" id="CHEBI:29950"/>
        <dbReference type="ChEBI" id="CHEBI:30616"/>
        <dbReference type="ChEBI" id="CHEBI:33019"/>
        <dbReference type="ChEBI" id="CHEBI:33737"/>
        <dbReference type="ChEBI" id="CHEBI:33738"/>
        <dbReference type="ChEBI" id="CHEBI:61963"/>
        <dbReference type="ChEBI" id="CHEBI:65315"/>
        <dbReference type="ChEBI" id="CHEBI:136798"/>
        <dbReference type="ChEBI" id="CHEBI:456215"/>
        <dbReference type="EC" id="2.8.1.4"/>
    </reaction>
</comment>
<comment type="catalytic activity">
    <reaction evidence="1">
        <text>[ThiS sulfur-carrier protein]-C-terminal Gly-Gly-AMP + S-sulfanyl-L-cysteinyl-[cysteine desulfurase] + AH2 = [ThiS sulfur-carrier protein]-C-terminal-Gly-aminoethanethioate + L-cysteinyl-[cysteine desulfurase] + A + AMP + 2 H(+)</text>
        <dbReference type="Rhea" id="RHEA:43340"/>
        <dbReference type="Rhea" id="RHEA-COMP:12157"/>
        <dbReference type="Rhea" id="RHEA-COMP:12158"/>
        <dbReference type="Rhea" id="RHEA-COMP:12910"/>
        <dbReference type="Rhea" id="RHEA-COMP:19908"/>
        <dbReference type="ChEBI" id="CHEBI:13193"/>
        <dbReference type="ChEBI" id="CHEBI:15378"/>
        <dbReference type="ChEBI" id="CHEBI:17499"/>
        <dbReference type="ChEBI" id="CHEBI:29950"/>
        <dbReference type="ChEBI" id="CHEBI:61963"/>
        <dbReference type="ChEBI" id="CHEBI:90618"/>
        <dbReference type="ChEBI" id="CHEBI:232372"/>
        <dbReference type="ChEBI" id="CHEBI:456215"/>
    </reaction>
</comment>
<comment type="pathway">
    <text evidence="1">Cofactor biosynthesis; thiamine diphosphate biosynthesis.</text>
</comment>
<comment type="subcellular location">
    <subcellularLocation>
        <location evidence="1">Cytoplasm</location>
    </subcellularLocation>
</comment>
<comment type="similarity">
    <text evidence="1">Belongs to the ThiI family.</text>
</comment>
<dbReference type="EC" id="2.8.1.4" evidence="1"/>
<dbReference type="EMBL" id="CP000517">
    <property type="protein sequence ID" value="ABX26953.1"/>
    <property type="molecule type" value="Genomic_DNA"/>
</dbReference>
<dbReference type="RefSeq" id="WP_012211681.1">
    <property type="nucleotide sequence ID" value="NC_010080.1"/>
</dbReference>
<dbReference type="SMR" id="A8YUL5"/>
<dbReference type="KEGG" id="lhe:lhv_0823"/>
<dbReference type="eggNOG" id="COG0301">
    <property type="taxonomic scope" value="Bacteria"/>
</dbReference>
<dbReference type="HOGENOM" id="CLU_037952_4_0_9"/>
<dbReference type="UniPathway" id="UPA00060"/>
<dbReference type="Proteomes" id="UP000000790">
    <property type="component" value="Chromosome"/>
</dbReference>
<dbReference type="GO" id="GO:0005829">
    <property type="term" value="C:cytosol"/>
    <property type="evidence" value="ECO:0007669"/>
    <property type="project" value="TreeGrafter"/>
</dbReference>
<dbReference type="GO" id="GO:0005524">
    <property type="term" value="F:ATP binding"/>
    <property type="evidence" value="ECO:0007669"/>
    <property type="project" value="UniProtKB-UniRule"/>
</dbReference>
<dbReference type="GO" id="GO:0004810">
    <property type="term" value="F:CCA tRNA nucleotidyltransferase activity"/>
    <property type="evidence" value="ECO:0007669"/>
    <property type="project" value="InterPro"/>
</dbReference>
<dbReference type="GO" id="GO:0000049">
    <property type="term" value="F:tRNA binding"/>
    <property type="evidence" value="ECO:0007669"/>
    <property type="project" value="UniProtKB-UniRule"/>
</dbReference>
<dbReference type="GO" id="GO:0140741">
    <property type="term" value="F:tRNA-uracil-4 sulfurtransferase activity"/>
    <property type="evidence" value="ECO:0007669"/>
    <property type="project" value="UniProtKB-EC"/>
</dbReference>
<dbReference type="GO" id="GO:0009228">
    <property type="term" value="P:thiamine biosynthetic process"/>
    <property type="evidence" value="ECO:0007669"/>
    <property type="project" value="UniProtKB-KW"/>
</dbReference>
<dbReference type="GO" id="GO:0009229">
    <property type="term" value="P:thiamine diphosphate biosynthetic process"/>
    <property type="evidence" value="ECO:0007669"/>
    <property type="project" value="UniProtKB-UniRule"/>
</dbReference>
<dbReference type="GO" id="GO:0052837">
    <property type="term" value="P:thiazole biosynthetic process"/>
    <property type="evidence" value="ECO:0007669"/>
    <property type="project" value="TreeGrafter"/>
</dbReference>
<dbReference type="GO" id="GO:0002937">
    <property type="term" value="P:tRNA 4-thiouridine biosynthesis"/>
    <property type="evidence" value="ECO:0007669"/>
    <property type="project" value="TreeGrafter"/>
</dbReference>
<dbReference type="CDD" id="cd01712">
    <property type="entry name" value="PPase_ThiI"/>
    <property type="match status" value="1"/>
</dbReference>
<dbReference type="CDD" id="cd11716">
    <property type="entry name" value="THUMP_ThiI"/>
    <property type="match status" value="1"/>
</dbReference>
<dbReference type="FunFam" id="3.40.50.620:FF:000053">
    <property type="entry name" value="Probable tRNA sulfurtransferase"/>
    <property type="match status" value="1"/>
</dbReference>
<dbReference type="Gene3D" id="3.30.2130.30">
    <property type="match status" value="1"/>
</dbReference>
<dbReference type="Gene3D" id="3.40.50.620">
    <property type="entry name" value="HUPs"/>
    <property type="match status" value="1"/>
</dbReference>
<dbReference type="HAMAP" id="MF_00021">
    <property type="entry name" value="ThiI"/>
    <property type="match status" value="1"/>
</dbReference>
<dbReference type="InterPro" id="IPR014729">
    <property type="entry name" value="Rossmann-like_a/b/a_fold"/>
</dbReference>
<dbReference type="InterPro" id="IPR020536">
    <property type="entry name" value="ThiI_AANH"/>
</dbReference>
<dbReference type="InterPro" id="IPR054173">
    <property type="entry name" value="ThiI_fer"/>
</dbReference>
<dbReference type="InterPro" id="IPR049961">
    <property type="entry name" value="ThiI_N"/>
</dbReference>
<dbReference type="InterPro" id="IPR004114">
    <property type="entry name" value="THUMP_dom"/>
</dbReference>
<dbReference type="InterPro" id="IPR049962">
    <property type="entry name" value="THUMP_ThiI"/>
</dbReference>
<dbReference type="InterPro" id="IPR003720">
    <property type="entry name" value="tRNA_STrfase"/>
</dbReference>
<dbReference type="InterPro" id="IPR050102">
    <property type="entry name" value="tRNA_sulfurtransferase_ThiI"/>
</dbReference>
<dbReference type="NCBIfam" id="TIGR00342">
    <property type="entry name" value="tRNA uracil 4-sulfurtransferase ThiI"/>
    <property type="match status" value="1"/>
</dbReference>
<dbReference type="PANTHER" id="PTHR43209">
    <property type="entry name" value="TRNA SULFURTRANSFERASE"/>
    <property type="match status" value="1"/>
</dbReference>
<dbReference type="PANTHER" id="PTHR43209:SF1">
    <property type="entry name" value="TRNA SULFURTRANSFERASE"/>
    <property type="match status" value="1"/>
</dbReference>
<dbReference type="Pfam" id="PF02568">
    <property type="entry name" value="ThiI"/>
    <property type="match status" value="1"/>
</dbReference>
<dbReference type="Pfam" id="PF22025">
    <property type="entry name" value="ThiI_fer"/>
    <property type="match status" value="1"/>
</dbReference>
<dbReference type="Pfam" id="PF02926">
    <property type="entry name" value="THUMP"/>
    <property type="match status" value="1"/>
</dbReference>
<dbReference type="SMART" id="SM00981">
    <property type="entry name" value="THUMP"/>
    <property type="match status" value="1"/>
</dbReference>
<dbReference type="SUPFAM" id="SSF52402">
    <property type="entry name" value="Adenine nucleotide alpha hydrolases-like"/>
    <property type="match status" value="1"/>
</dbReference>
<dbReference type="SUPFAM" id="SSF143437">
    <property type="entry name" value="THUMP domain-like"/>
    <property type="match status" value="1"/>
</dbReference>
<dbReference type="PROSITE" id="PS51165">
    <property type="entry name" value="THUMP"/>
    <property type="match status" value="1"/>
</dbReference>
<name>THII_LACH4</name>
<accession>A8YUL5</accession>